<protein>
    <recommendedName>
        <fullName>Probable ureide permease A3</fullName>
    </recommendedName>
    <alternativeName>
        <fullName>VuA3</fullName>
    </alternativeName>
</protein>
<proteinExistence type="evidence at transcript level"/>
<reference key="1">
    <citation type="online journal article" date="1996" name="Plant Gene Register">
        <title>VuA3, a gene of Vigna unguiculata encoding a protein with unknown function.</title>
        <authorList>
            <person name="Chaya M.S."/>
            <person name="Broughton W.J."/>
            <person name="Krause A."/>
        </authorList>
        <locator>PGR96-072</locator>
    </citation>
    <scope>NUCLEOTIDE SEQUENCE [MRNA]</scope>
    <source>
        <strain>cv. Red Caloona</strain>
        <tissue>Root hair</tissue>
    </source>
</reference>
<sequence length="376" mass="41329">HLVESKGGAIACMFLALFFLGTWPALLTMLERRGRLPQHTYLDYSITNFFAALLIAFTFGEIGKGKPDEPNFLAQLAQDNWPSVLFAMGGGVVLSLGNLSSQYAFAFVGLSVTEVITASITVVIGTTLNYFLDDKINKAEILFPGVGCFLIAVFLGFCRFNSSNASDNKAKLSNYTSDYKEVAISSKESDLVKSKDLERGSSSADNVEAGTAVFLLELEERRAIKVFGKSTLIGLALTFSAGLCFSMFSPAFNLATNDQWHTLPNGIPHLTVYTAFFYFSISCFVIAIILNITFLYHPVLNLPKSSLKAYLADSDGRIWALLAGLLCGFGNSLQFMGGQAAGYQQQSLCRHFLCKHFWGVLLFGEYRRSSRKTYIC</sequence>
<organism>
    <name type="scientific">Vigna unguiculata</name>
    <name type="common">Cowpea</name>
    <dbReference type="NCBI Taxonomy" id="3917"/>
    <lineage>
        <taxon>Eukaryota</taxon>
        <taxon>Viridiplantae</taxon>
        <taxon>Streptophyta</taxon>
        <taxon>Embryophyta</taxon>
        <taxon>Tracheophyta</taxon>
        <taxon>Spermatophyta</taxon>
        <taxon>Magnoliopsida</taxon>
        <taxon>eudicotyledons</taxon>
        <taxon>Gunneridae</taxon>
        <taxon>Pentapetalae</taxon>
        <taxon>rosids</taxon>
        <taxon>fabids</taxon>
        <taxon>Fabales</taxon>
        <taxon>Fabaceae</taxon>
        <taxon>Papilionoideae</taxon>
        <taxon>50 kb inversion clade</taxon>
        <taxon>NPAAA clade</taxon>
        <taxon>indigoferoid/millettioid clade</taxon>
        <taxon>Phaseoleae</taxon>
        <taxon>Vigna</taxon>
    </lineage>
</organism>
<feature type="chain" id="PRO_0000221650" description="Probable ureide permease A3">
    <location>
        <begin position="1" status="less than"/>
        <end position="376"/>
    </location>
</feature>
<feature type="topological domain" description="Extracellular" evidence="2">
    <location>
        <begin position="1" status="less than"/>
        <end position="9"/>
    </location>
</feature>
<feature type="transmembrane region" description="Helical" evidence="2">
    <location>
        <begin position="10"/>
        <end position="30"/>
    </location>
</feature>
<feature type="topological domain" description="Cytoplasmic" evidence="2">
    <location>
        <begin position="31"/>
        <end position="41"/>
    </location>
</feature>
<feature type="transmembrane region" description="Helical" evidence="2">
    <location>
        <begin position="42"/>
        <end position="62"/>
    </location>
</feature>
<feature type="topological domain" description="Extracellular" evidence="2">
    <location>
        <begin position="63"/>
        <end position="80"/>
    </location>
</feature>
<feature type="transmembrane region" description="Helical" evidence="2">
    <location>
        <begin position="81"/>
        <end position="101"/>
    </location>
</feature>
<feature type="topological domain" description="Cytoplasmic" evidence="2">
    <location>
        <begin position="102"/>
        <end position="103"/>
    </location>
</feature>
<feature type="transmembrane region" description="Helical" evidence="2">
    <location>
        <begin position="104"/>
        <end position="124"/>
    </location>
</feature>
<feature type="topological domain" description="Extracellular" evidence="2">
    <location>
        <begin position="125"/>
        <end position="137"/>
    </location>
</feature>
<feature type="transmembrane region" description="Helical" evidence="2">
    <location>
        <begin position="138"/>
        <end position="158"/>
    </location>
</feature>
<feature type="topological domain" description="Cytoplasmic" evidence="2">
    <location>
        <begin position="159"/>
        <end position="231"/>
    </location>
</feature>
<feature type="transmembrane region" description="Helical" evidence="2">
    <location>
        <begin position="232"/>
        <end position="252"/>
    </location>
</feature>
<feature type="topological domain" description="Extracellular" evidence="2">
    <location>
        <begin position="253"/>
        <end position="274"/>
    </location>
</feature>
<feature type="transmembrane region" description="Helical" evidence="2">
    <location>
        <begin position="275"/>
        <end position="295"/>
    </location>
</feature>
<feature type="topological domain" description="Cytoplasmic" evidence="2">
    <location>
        <begin position="296"/>
        <end position="317"/>
    </location>
</feature>
<feature type="transmembrane region" description="Helical" evidence="2">
    <location>
        <begin position="318"/>
        <end position="338"/>
    </location>
</feature>
<feature type="topological domain" description="Extracellular" evidence="2">
    <location>
        <begin position="339"/>
        <end position="376"/>
    </location>
</feature>
<feature type="binding site" evidence="2">
    <location>
        <begin position="223"/>
        <end position="230"/>
    </location>
    <ligand>
        <name>ATP</name>
        <dbReference type="ChEBI" id="CHEBI:30616"/>
    </ligand>
</feature>
<feature type="non-terminal residue">
    <location>
        <position position="1"/>
    </location>
</feature>
<comment type="function">
    <text evidence="1">Transports a wide spectrum of oxo derivatives of heterocyclic nitrogen compounds.</text>
</comment>
<comment type="subcellular location">
    <subcellularLocation>
        <location evidence="3">Membrane</location>
        <topology evidence="3">Multi-pass membrane protein</topology>
    </subcellularLocation>
</comment>
<comment type="similarity">
    <text evidence="3">Belongs to the plant ureide permease (TC 2.A.7.19) family.</text>
</comment>
<comment type="sequence caution" evidence="3">
    <conflict type="erroneous initiation">
        <sequence resource="EMBL-CDS" id="CAA62086"/>
    </conflict>
</comment>
<accession>Q41706</accession>
<keyword id="KW-0067">ATP-binding</keyword>
<keyword id="KW-0472">Membrane</keyword>
<keyword id="KW-0547">Nucleotide-binding</keyword>
<keyword id="KW-0812">Transmembrane</keyword>
<keyword id="KW-1133">Transmembrane helix</keyword>
<keyword id="KW-0813">Transport</keyword>
<name>UPSA3_VIGUN</name>
<evidence type="ECO:0000250" key="1"/>
<evidence type="ECO:0000255" key="2"/>
<evidence type="ECO:0000305" key="3"/>
<dbReference type="EMBL" id="X90487">
    <property type="protein sequence ID" value="CAA62086.1"/>
    <property type="status" value="ALT_INIT"/>
    <property type="molecule type" value="mRNA"/>
</dbReference>
<dbReference type="PIR" id="S58310">
    <property type="entry name" value="S58310"/>
</dbReference>
<dbReference type="GO" id="GO:0016020">
    <property type="term" value="C:membrane"/>
    <property type="evidence" value="ECO:0007669"/>
    <property type="project" value="UniProtKB-SubCell"/>
</dbReference>
<dbReference type="GO" id="GO:0005274">
    <property type="term" value="F:allantoin:proton symporter activity"/>
    <property type="evidence" value="ECO:0007669"/>
    <property type="project" value="TreeGrafter"/>
</dbReference>
<dbReference type="GO" id="GO:0005524">
    <property type="term" value="F:ATP binding"/>
    <property type="evidence" value="ECO:0007669"/>
    <property type="project" value="UniProtKB-KW"/>
</dbReference>
<dbReference type="GO" id="GO:0015505">
    <property type="term" value="F:uracil:monoatomic cation symporter activity"/>
    <property type="evidence" value="ECO:0007669"/>
    <property type="project" value="TreeGrafter"/>
</dbReference>
<dbReference type="InterPro" id="IPR030189">
    <property type="entry name" value="UPS_plant"/>
</dbReference>
<dbReference type="InterPro" id="IPR009834">
    <property type="entry name" value="Ureide_permease"/>
</dbReference>
<dbReference type="PANTHER" id="PTHR31081:SF5">
    <property type="entry name" value="UREIDE PERMEASE 1-RELATED"/>
    <property type="match status" value="1"/>
</dbReference>
<dbReference type="PANTHER" id="PTHR31081">
    <property type="entry name" value="UREIDE PERMEASE 1-RELATED-RELATED"/>
    <property type="match status" value="1"/>
</dbReference>
<dbReference type="Pfam" id="PF07168">
    <property type="entry name" value="Ureide_permease"/>
    <property type="match status" value="1"/>
</dbReference>
<gene>
    <name type="primary">A3</name>
</gene>